<name>REBG_LENAE</name>
<comment type="function">
    <text evidence="1 2">Catalyzes the penultimate step in the biosynthesis of rebeccamycin, an indolocarbazole alkaloid that inhibits topoisomerase 1. Has a wide substrate range, including staurosporine aglycone, EJG-III-108A, J-104303, 6-N-methyl-arcyriaflavin and indolo-[2,3-a]-carbazole.</text>
</comment>
<comment type="catalytic activity">
    <reaction evidence="3">
        <text>4'-demethylrebeccamycin + H2O = dichloroarcyriaflavin A + beta-D-glucose</text>
        <dbReference type="Rhea" id="RHEA:27397"/>
        <dbReference type="ChEBI" id="CHEBI:15377"/>
        <dbReference type="ChEBI" id="CHEBI:15903"/>
        <dbReference type="ChEBI" id="CHEBI:330772"/>
        <dbReference type="ChEBI" id="CHEBI:595389"/>
        <dbReference type="EC" id="4.3.3.5"/>
    </reaction>
</comment>
<comment type="pathway">
    <text>Alkaloid biosynthesis.</text>
</comment>
<comment type="similarity">
    <text evidence="4">Belongs to the glycosyltransferase 28 family.</text>
</comment>
<evidence type="ECO:0000269" key="1">
    <source>
    </source>
</evidence>
<evidence type="ECO:0000269" key="2">
    <source>
    </source>
</evidence>
<evidence type="ECO:0000269" key="3">
    <source>
    </source>
</evidence>
<evidence type="ECO:0000305" key="4"/>
<proteinExistence type="evidence at protein level"/>
<keyword id="KW-0456">Lyase</keyword>
<accession>Q8KHE4</accession>
<accession>Q9S595</accession>
<organism>
    <name type="scientific">Lentzea aerocolonigenes</name>
    <name type="common">Lechevalieria aerocolonigenes</name>
    <name type="synonym">Saccharothrix aerocolonigenes</name>
    <dbReference type="NCBI Taxonomy" id="68170"/>
    <lineage>
        <taxon>Bacteria</taxon>
        <taxon>Bacillati</taxon>
        <taxon>Actinomycetota</taxon>
        <taxon>Actinomycetes</taxon>
        <taxon>Pseudonocardiales</taxon>
        <taxon>Pseudonocardiaceae</taxon>
        <taxon>Lentzea</taxon>
    </lineage>
</organism>
<gene>
    <name type="primary">rebG</name>
    <name type="synonym">rbmA</name>
</gene>
<feature type="chain" id="PRO_0000424220" description="4'-demethylrebeccamycin synthase">
    <location>
        <begin position="1"/>
        <end position="421"/>
    </location>
</feature>
<feature type="sequence conflict" description="In Ref. 1; BAA83130." evidence="4" ref="1">
    <original>ANDAER</original>
    <variation>GQRRGT</variation>
    <location>
        <begin position="270"/>
        <end position="275"/>
    </location>
</feature>
<feature type="sequence conflict" description="In Ref. 1; BAA83130." evidence="4" ref="1">
    <location>
        <position position="348"/>
    </location>
</feature>
<feature type="sequence conflict" description="In Ref. 1; BAA83130." evidence="4" ref="1">
    <original>A</original>
    <variation>R</variation>
    <location>
        <position position="350"/>
    </location>
</feature>
<feature type="sequence conflict" description="In Ref. 1; BAA83130." evidence="4" ref="1">
    <original>VDLIEGLV</original>
    <variation>ST</variation>
    <location>
        <begin position="414"/>
        <end position="421"/>
    </location>
</feature>
<reference key="1">
    <citation type="journal article" date="2000" name="J. Antibiot.">
        <title>Cloning and expression of a gene encoding N-glycosyltransferase (ngt) from Saccarothrix aerocolonigenes ATCC39243.</title>
        <authorList>
            <person name="Ohuchi T."/>
            <person name="Ikeda-Araki A."/>
            <person name="Watanabe-Sakamoto A."/>
            <person name="Kojiri K."/>
            <person name="Nagashima M."/>
            <person name="Okanishi M."/>
            <person name="Suda H."/>
        </authorList>
    </citation>
    <scope>NUCLEOTIDE SEQUENCE [GENOMIC DNA]</scope>
    <scope>FUNCTION</scope>
    <source>
        <strain>ATCC 39243 / DSM 44217 / BCRC 13729 / KCTC 9384</strain>
    </source>
</reference>
<reference key="2">
    <citation type="journal article" date="2002" name="Chem. Biol.">
        <title>The biosynthetic gene cluster for the antitumor rebeccamycin: characterization and generation of indolocarbazole derivatives.</title>
        <authorList>
            <person name="Sanchez C."/>
            <person name="Butovich I.A."/>
            <person name="Brana A.F."/>
            <person name="Rohr J."/>
            <person name="Mendez C."/>
            <person name="Salas J.A."/>
        </authorList>
    </citation>
    <scope>NUCLEOTIDE SEQUENCE [GENOMIC DNA]</scope>
    <source>
        <strain>ATCC 39243 / DSM 44217 / BCRC 13729 / KCTC 9384</strain>
    </source>
</reference>
<reference key="3">
    <citation type="journal article" date="2002" name="J. Antibiot.">
        <title>Cloning of the staurosporine biosynthetic gene cluster from Streptomyces sp. TP-A0274 and its heterologous expression in Streptomyces lividans.</title>
        <authorList>
            <person name="Onaka H."/>
            <person name="Taniguchi S."/>
            <person name="Igarashi Y."/>
            <person name="Furumai T."/>
        </authorList>
    </citation>
    <scope>NUCLEOTIDE SEQUENCE [GENOMIC DNA]</scope>
    <source>
        <strain>ATCC 39243 / DSM 44217 / BCRC 13729 / KCTC 9384</strain>
    </source>
</reference>
<reference key="4">
    <citation type="journal article" date="2003" name="ChemBioChem">
        <title>The biosynthesis of indolocarbazoles in a heterologous E. coli host.</title>
        <authorList>
            <person name="Hyun C.G."/>
            <person name="Bililign T."/>
            <person name="Liao J."/>
            <person name="Thorson J.S."/>
        </authorList>
    </citation>
    <scope>NUCLEOTIDE SEQUENCE [GENOMIC DNA]</scope>
    <source>
        <strain>ATCC 39243 / DSM 44217 / BCRC 13729 / KCTC 9384</strain>
    </source>
</reference>
<reference key="5">
    <citation type="journal article" date="2005" name="J. Bacteriol.">
        <title>Molecular analysis of the rebeccamycin L-amino acid oxidase from Lechevalieria aerocolonigenes ATCC 39243.</title>
        <authorList>
            <person name="Nishizawa T."/>
            <person name="Aldrich C.C."/>
            <person name="Sherman D.H."/>
        </authorList>
    </citation>
    <scope>NUCLEOTIDE SEQUENCE [GENOMIC DNA]</scope>
    <source>
        <strain>ATCC 39243 / DSM 44217 / BCRC 13729 / KCTC 9384</strain>
    </source>
</reference>
<reference key="6">
    <citation type="journal article" date="2003" name="Biosci. Biotechnol. Biochem.">
        <title>Characterization of the biosynthetic gene cluster of rebeccamycin from Lechevalieria aerocolonigenes ATCC 39243.</title>
        <authorList>
            <person name="Onaka H."/>
            <person name="Taniguchi S."/>
            <person name="Igarashi Y."/>
            <person name="Furumai T."/>
        </authorList>
    </citation>
    <scope>FUNCTION</scope>
    <source>
        <strain>ATCC 39243 / DSM 44217 / BCRC 13729 / KCTC 9384</strain>
    </source>
</reference>
<reference key="7">
    <citation type="journal article" date="2006" name="ChemBioChem">
        <title>RebG- and RebM-catalyzed indolocarbazole diversification.</title>
        <authorList>
            <person name="Zhang C."/>
            <person name="Albermann C."/>
            <person name="Fu X."/>
            <person name="Peters N.R."/>
            <person name="Chisholm J.D."/>
            <person name="Zhang G."/>
            <person name="Gilbert E.J."/>
            <person name="Wang P.G."/>
            <person name="Van Vranken D.L."/>
            <person name="Thorson J.S."/>
        </authorList>
    </citation>
    <scope>CATALYTIC ACTIVITY</scope>
    <source>
        <strain>ATCC 39243 / DSM 44217 / BCRC 13729 / KCTC 9384</strain>
    </source>
</reference>
<dbReference type="EC" id="4.3.3.5"/>
<dbReference type="EMBL" id="AB023953">
    <property type="protein sequence ID" value="BAA83130.1"/>
    <property type="molecule type" value="Genomic_DNA"/>
</dbReference>
<dbReference type="EMBL" id="AJ414559">
    <property type="protein sequence ID" value="CAC93713.1"/>
    <property type="molecule type" value="Genomic_DNA"/>
</dbReference>
<dbReference type="EMBL" id="AB071405">
    <property type="protein sequence ID" value="BAC15749.1"/>
    <property type="molecule type" value="Genomic_DNA"/>
</dbReference>
<dbReference type="EMBL" id="AF534707">
    <property type="protein sequence ID" value="AAN01207.1"/>
    <property type="molecule type" value="Genomic_DNA"/>
</dbReference>
<dbReference type="EMBL" id="AB090952">
    <property type="protein sequence ID" value="BAC10673.1"/>
    <property type="molecule type" value="Genomic_DNA"/>
</dbReference>
<dbReference type="SMR" id="Q8KHE4"/>
<dbReference type="CAZy" id="GT1">
    <property type="family name" value="Glycosyltransferase Family 1"/>
</dbReference>
<dbReference type="KEGG" id="ag:BAC10673"/>
<dbReference type="BioCyc" id="MetaCyc:MONOMER-15083"/>
<dbReference type="BRENDA" id="4.3.3.5">
    <property type="organism ID" value="4340"/>
</dbReference>
<dbReference type="GO" id="GO:0016758">
    <property type="term" value="F:hexosyltransferase activity"/>
    <property type="evidence" value="ECO:0007669"/>
    <property type="project" value="UniProtKB-ARBA"/>
</dbReference>
<dbReference type="GO" id="GO:0016829">
    <property type="term" value="F:lyase activity"/>
    <property type="evidence" value="ECO:0007669"/>
    <property type="project" value="UniProtKB-KW"/>
</dbReference>
<dbReference type="GO" id="GO:0008194">
    <property type="term" value="F:UDP-glycosyltransferase activity"/>
    <property type="evidence" value="ECO:0007669"/>
    <property type="project" value="InterPro"/>
</dbReference>
<dbReference type="GO" id="GO:0017000">
    <property type="term" value="P:antibiotic biosynthetic process"/>
    <property type="evidence" value="ECO:0007669"/>
    <property type="project" value="UniProtKB-ARBA"/>
</dbReference>
<dbReference type="CDD" id="cd03784">
    <property type="entry name" value="GT1_Gtf-like"/>
    <property type="match status" value="1"/>
</dbReference>
<dbReference type="FunFam" id="3.40.50.2000:FF:000072">
    <property type="entry name" value="Glycosyl transferase"/>
    <property type="match status" value="1"/>
</dbReference>
<dbReference type="Gene3D" id="3.40.50.2000">
    <property type="entry name" value="Glycogen Phosphorylase B"/>
    <property type="match status" value="2"/>
</dbReference>
<dbReference type="InterPro" id="IPR010610">
    <property type="entry name" value="EryCIII-like_C"/>
</dbReference>
<dbReference type="InterPro" id="IPR050426">
    <property type="entry name" value="Glycosyltransferase_28"/>
</dbReference>
<dbReference type="InterPro" id="IPR002213">
    <property type="entry name" value="UDP_glucos_trans"/>
</dbReference>
<dbReference type="PANTHER" id="PTHR48050">
    <property type="entry name" value="STEROL 3-BETA-GLUCOSYLTRANSFERASE"/>
    <property type="match status" value="1"/>
</dbReference>
<dbReference type="PANTHER" id="PTHR48050:SF13">
    <property type="entry name" value="STEROL 3-BETA-GLUCOSYLTRANSFERASE UGT80A2"/>
    <property type="match status" value="1"/>
</dbReference>
<dbReference type="Pfam" id="PF06722">
    <property type="entry name" value="EryCIII-like_C"/>
    <property type="match status" value="1"/>
</dbReference>
<dbReference type="SUPFAM" id="SSF53756">
    <property type="entry name" value="UDP-Glycosyltransferase/glycogen phosphorylase"/>
    <property type="match status" value="1"/>
</dbReference>
<protein>
    <recommendedName>
        <fullName>4'-demethylrebeccamycin synthase</fullName>
        <ecNumber>4.3.3.5</ecNumber>
    </recommendedName>
    <alternativeName>
        <fullName>Arcyriaflavin A N-glycosyltransferase</fullName>
    </alternativeName>
</protein>
<sequence length="421" mass="46021">MGARVLVATTPGDGHVNPMVPVAQEMVSRGHEVRWYTGKAFRSTVERTGARHEPMRDAHDFGGMPREEAFPQHAGLTGITGMIAGFRDIFIEPAADQMTDLLALLEDFPADVLVTDETFFGAGFVSERTGIPVAWIATSIYVFSSRDTAPLGLGLPPSSSRLGRLRNTVLKQLTDRVVMRDLRRHADVVRDRVGLPRIRKGAFENIMRTPDLYLLGTVPSFEYPRGDMPPEVRFVGPFVSPAPPDFTPPAWWGELDSGRPVVHVTQGTVANDAERLLLPAIRALAAEDVLVVATTGAPLELEPMPANVRVERFIPHHALLPHVDAMVTNGGYGGVNTALAHGVPLVVAAATEEKHEVAARVSWSGAGVHLKKRRLSERDIRRAVRAVLDEPRFRVHAARLRDEYAARDAVVDAVDLIEGLV</sequence>